<keyword id="KW-0002">3D-structure</keyword>
<keyword id="KW-1003">Cell membrane</keyword>
<keyword id="KW-0161">Chronic granulomatous disease</keyword>
<keyword id="KW-0903">Direct protein sequencing</keyword>
<keyword id="KW-0225">Disease variant</keyword>
<keyword id="KW-0249">Electron transport</keyword>
<keyword id="KW-0349">Heme</keyword>
<keyword id="KW-0408">Iron</keyword>
<keyword id="KW-1017">Isopeptide bond</keyword>
<keyword id="KW-0472">Membrane</keyword>
<keyword id="KW-0479">Metal-binding</keyword>
<keyword id="KW-0521">NADP</keyword>
<keyword id="KW-0560">Oxidoreductase</keyword>
<keyword id="KW-0597">Phosphoprotein</keyword>
<keyword id="KW-1267">Proteomics identification</keyword>
<keyword id="KW-1185">Reference proteome</keyword>
<keyword id="KW-0812">Transmembrane</keyword>
<keyword id="KW-1133">Transmembrane helix</keyword>
<keyword id="KW-0813">Transport</keyword>
<keyword id="KW-0832">Ubl conjugation</keyword>
<dbReference type="EMBL" id="M21186">
    <property type="protein sequence ID" value="AAA90925.1"/>
    <property type="molecule type" value="mRNA"/>
</dbReference>
<dbReference type="EMBL" id="BT006861">
    <property type="protein sequence ID" value="AAP35507.1"/>
    <property type="molecule type" value="mRNA"/>
</dbReference>
<dbReference type="EMBL" id="AC116552">
    <property type="status" value="NOT_ANNOTATED_CDS"/>
    <property type="molecule type" value="Genomic_DNA"/>
</dbReference>
<dbReference type="EMBL" id="BC006465">
    <property type="protein sequence ID" value="AAH06465.1"/>
    <property type="molecule type" value="mRNA"/>
</dbReference>
<dbReference type="EMBL" id="AH002664">
    <property type="protein sequence ID" value="AAA52134.1"/>
    <property type="molecule type" value="Genomic_DNA"/>
</dbReference>
<dbReference type="CCDS" id="CCDS32504.1"/>
<dbReference type="PIR" id="A28201">
    <property type="entry name" value="A28201"/>
</dbReference>
<dbReference type="RefSeq" id="NP_000092.2">
    <property type="nucleotide sequence ID" value="NM_000101.4"/>
</dbReference>
<dbReference type="PDB" id="1WLP">
    <property type="method" value="NMR"/>
    <property type="chains" value="A=149-168"/>
</dbReference>
<dbReference type="PDB" id="7U8G">
    <property type="method" value="EM"/>
    <property type="resolution" value="3.20 A"/>
    <property type="chains" value="B=1-195"/>
</dbReference>
<dbReference type="PDB" id="7YXW">
    <property type="method" value="X-ray"/>
    <property type="resolution" value="2.50 A"/>
    <property type="chains" value="D=151-168"/>
</dbReference>
<dbReference type="PDB" id="8GZ3">
    <property type="method" value="EM"/>
    <property type="resolution" value="3.30 A"/>
    <property type="chains" value="A=1-195"/>
</dbReference>
<dbReference type="PDB" id="8KEI">
    <property type="method" value="EM"/>
    <property type="resolution" value="3.56 A"/>
    <property type="chains" value="A=3-135"/>
</dbReference>
<dbReference type="PDB" id="8WEJ">
    <property type="method" value="EM"/>
    <property type="resolution" value="2.79 A"/>
    <property type="chains" value="A=1-195"/>
</dbReference>
<dbReference type="PDB" id="8X2L">
    <property type="method" value="EM"/>
    <property type="resolution" value="2.99 A"/>
    <property type="chains" value="A=1-195"/>
</dbReference>
<dbReference type="PDBsum" id="1WLP"/>
<dbReference type="PDBsum" id="7U8G"/>
<dbReference type="PDBsum" id="7YXW"/>
<dbReference type="PDBsum" id="8GZ3"/>
<dbReference type="PDBsum" id="8KEI"/>
<dbReference type="PDBsum" id="8WEJ"/>
<dbReference type="PDBsum" id="8X2L"/>
<dbReference type="EMDB" id="EMD-26383"/>
<dbReference type="EMDB" id="EMD-34389"/>
<dbReference type="EMDB" id="EMD-37159"/>
<dbReference type="EMDB" id="EMD-37477"/>
<dbReference type="EMDB" id="EMD-38016"/>
<dbReference type="SMR" id="P13498"/>
<dbReference type="BioGRID" id="107915">
    <property type="interactions" value="77"/>
</dbReference>
<dbReference type="ComplexPortal" id="CPX-1017">
    <property type="entry name" value="Phagocyte NADPH oxidase complex, RAC1 variant"/>
</dbReference>
<dbReference type="ComplexPortal" id="CPX-6134">
    <property type="entry name" value="Phagocyte NADPH oxidase complex, RAC2 variant"/>
</dbReference>
<dbReference type="ComplexPortal" id="CPX-6135">
    <property type="entry name" value="Phagocyte NADPH oxidase complex, RAC3 variant"/>
</dbReference>
<dbReference type="CORUM" id="P13498"/>
<dbReference type="DIP" id="DIP-37650N"/>
<dbReference type="FunCoup" id="P13498">
    <property type="interactions" value="670"/>
</dbReference>
<dbReference type="IntAct" id="P13498">
    <property type="interactions" value="47"/>
</dbReference>
<dbReference type="MINT" id="P13498"/>
<dbReference type="STRING" id="9606.ENSP00000261623"/>
<dbReference type="DrugBank" id="DB00514">
    <property type="generic name" value="Dextromethorphan"/>
</dbReference>
<dbReference type="TCDB" id="5.B.1.1.1">
    <property type="family name" value="the phagocyte (gp91(phox)) nadph oxidase family"/>
</dbReference>
<dbReference type="iPTMnet" id="P13498"/>
<dbReference type="PhosphoSitePlus" id="P13498"/>
<dbReference type="SwissPalm" id="P13498"/>
<dbReference type="BioMuta" id="CYBA"/>
<dbReference type="DMDM" id="311033459"/>
<dbReference type="jPOST" id="P13498"/>
<dbReference type="MassIVE" id="P13498"/>
<dbReference type="PaxDb" id="9606-ENSP00000261623"/>
<dbReference type="PeptideAtlas" id="P13498"/>
<dbReference type="ProteomicsDB" id="52920"/>
<dbReference type="Pumba" id="P13498"/>
<dbReference type="ABCD" id="P13498">
    <property type="antibodies" value="2 sequenced antibodies"/>
</dbReference>
<dbReference type="Antibodypedia" id="4009">
    <property type="antibodies" value="295 antibodies from 30 providers"/>
</dbReference>
<dbReference type="DNASU" id="1535"/>
<dbReference type="Ensembl" id="ENST00000261623.8">
    <property type="protein sequence ID" value="ENSP00000261623.3"/>
    <property type="gene ID" value="ENSG00000051523.12"/>
</dbReference>
<dbReference type="GeneID" id="1535"/>
<dbReference type="KEGG" id="hsa:1535"/>
<dbReference type="MANE-Select" id="ENST00000261623.8">
    <property type="protein sequence ID" value="ENSP00000261623.3"/>
    <property type="RefSeq nucleotide sequence ID" value="NM_000101.4"/>
    <property type="RefSeq protein sequence ID" value="NP_000092.2"/>
</dbReference>
<dbReference type="UCSC" id="uc002flb.5">
    <property type="organism name" value="human"/>
</dbReference>
<dbReference type="AGR" id="HGNC:2577"/>
<dbReference type="CTD" id="1535"/>
<dbReference type="DisGeNET" id="1535"/>
<dbReference type="GeneCards" id="CYBA"/>
<dbReference type="GeneReviews" id="CYBA"/>
<dbReference type="HGNC" id="HGNC:2577">
    <property type="gene designation" value="CYBA"/>
</dbReference>
<dbReference type="HPA" id="ENSG00000051523">
    <property type="expression patterns" value="Tissue enhanced (bone marrow, lymphoid tissue)"/>
</dbReference>
<dbReference type="MalaCards" id="CYBA"/>
<dbReference type="MIM" id="233690">
    <property type="type" value="phenotype"/>
</dbReference>
<dbReference type="MIM" id="608508">
    <property type="type" value="gene"/>
</dbReference>
<dbReference type="neXtProt" id="NX_P13498"/>
<dbReference type="OpenTargets" id="ENSG00000051523"/>
<dbReference type="Orphanet" id="379">
    <property type="disease" value="Chronic granulomatous disease"/>
</dbReference>
<dbReference type="PharmGKB" id="PA27075"/>
<dbReference type="VEuPathDB" id="HostDB:ENSG00000051523"/>
<dbReference type="eggNOG" id="ENOG502QVK1">
    <property type="taxonomic scope" value="Eukaryota"/>
</dbReference>
<dbReference type="GeneTree" id="ENSGT00390000002290"/>
<dbReference type="HOGENOM" id="CLU_125024_0_0_1"/>
<dbReference type="InParanoid" id="P13498"/>
<dbReference type="OMA" id="ARTGQYC"/>
<dbReference type="OrthoDB" id="2445232at2759"/>
<dbReference type="PAN-GO" id="P13498">
    <property type="GO annotations" value="2 GO annotations based on evolutionary models"/>
</dbReference>
<dbReference type="PhylomeDB" id="P13498"/>
<dbReference type="TreeFam" id="TF328901"/>
<dbReference type="PathwayCommons" id="P13498"/>
<dbReference type="Reactome" id="R-HSA-1222556">
    <property type="pathway name" value="ROS and RNS production in phagocytes"/>
</dbReference>
<dbReference type="Reactome" id="R-HSA-1236973">
    <property type="pathway name" value="Cross-presentation of particulate exogenous antigens (phagosomes)"/>
</dbReference>
<dbReference type="Reactome" id="R-HSA-3299685">
    <property type="pathway name" value="Detoxification of Reactive Oxygen Species"/>
</dbReference>
<dbReference type="Reactome" id="R-HSA-4420097">
    <property type="pathway name" value="VEGFA-VEGFR2 Pathway"/>
</dbReference>
<dbReference type="Reactome" id="R-HSA-5668599">
    <property type="pathway name" value="RHO GTPases Activate NADPH Oxidases"/>
</dbReference>
<dbReference type="Reactome" id="R-HSA-6798695">
    <property type="pathway name" value="Neutrophil degranulation"/>
</dbReference>
<dbReference type="Reactome" id="R-HSA-9013149">
    <property type="pathway name" value="RAC1 GTPase cycle"/>
</dbReference>
<dbReference type="Reactome" id="R-HSA-9013404">
    <property type="pathway name" value="RAC2 GTPase cycle"/>
</dbReference>
<dbReference type="Reactome" id="R-HSA-9013423">
    <property type="pathway name" value="RAC3 GTPase cycle"/>
</dbReference>
<dbReference type="Reactome" id="R-HSA-9673324">
    <property type="pathway name" value="WNT5:FZD7-mediated leishmania damping"/>
</dbReference>
<dbReference type="SignaLink" id="P13498"/>
<dbReference type="SIGNOR" id="P13498"/>
<dbReference type="BioGRID-ORCS" id="1535">
    <property type="hits" value="9 hits in 1155 CRISPR screens"/>
</dbReference>
<dbReference type="CD-CODE" id="1A18FFC4">
    <property type="entry name" value="Paraspeckle"/>
</dbReference>
<dbReference type="ChiTaRS" id="CYBA">
    <property type="organism name" value="human"/>
</dbReference>
<dbReference type="GenomeRNAi" id="1535"/>
<dbReference type="Pharos" id="P13498">
    <property type="development level" value="Tbio"/>
</dbReference>
<dbReference type="PRO" id="PR:P13498"/>
<dbReference type="Proteomes" id="UP000005640">
    <property type="component" value="Chromosome 16"/>
</dbReference>
<dbReference type="RNAct" id="P13498">
    <property type="molecule type" value="protein"/>
</dbReference>
<dbReference type="Bgee" id="ENSG00000051523">
    <property type="expression patterns" value="Expressed in granulocyte and 182 other cell types or tissues"/>
</dbReference>
<dbReference type="ExpressionAtlas" id="P13498">
    <property type="expression patterns" value="baseline and differential"/>
</dbReference>
<dbReference type="GO" id="GO:0016324">
    <property type="term" value="C:apical plasma membrane"/>
    <property type="evidence" value="ECO:0007669"/>
    <property type="project" value="Ensembl"/>
</dbReference>
<dbReference type="GO" id="GO:0030425">
    <property type="term" value="C:dendrite"/>
    <property type="evidence" value="ECO:0007669"/>
    <property type="project" value="Ensembl"/>
</dbReference>
<dbReference type="GO" id="GO:0005789">
    <property type="term" value="C:endoplasmic reticulum membrane"/>
    <property type="evidence" value="ECO:0000304"/>
    <property type="project" value="Reactome"/>
</dbReference>
<dbReference type="GO" id="GO:0005768">
    <property type="term" value="C:endosome"/>
    <property type="evidence" value="ECO:0007669"/>
    <property type="project" value="Ensembl"/>
</dbReference>
<dbReference type="GO" id="GO:0005925">
    <property type="term" value="C:focal adhesion"/>
    <property type="evidence" value="ECO:0007669"/>
    <property type="project" value="Ensembl"/>
</dbReference>
<dbReference type="GO" id="GO:0016020">
    <property type="term" value="C:membrane"/>
    <property type="evidence" value="ECO:0007005"/>
    <property type="project" value="UniProtKB"/>
</dbReference>
<dbReference type="GO" id="GO:0043020">
    <property type="term" value="C:NADPH oxidase complex"/>
    <property type="evidence" value="ECO:0000314"/>
    <property type="project" value="UniProtKB"/>
</dbReference>
<dbReference type="GO" id="GO:0043025">
    <property type="term" value="C:neuronal cell body"/>
    <property type="evidence" value="ECO:0007669"/>
    <property type="project" value="Ensembl"/>
</dbReference>
<dbReference type="GO" id="GO:0097038">
    <property type="term" value="C:perinuclear endoplasmic reticulum"/>
    <property type="evidence" value="ECO:0007669"/>
    <property type="project" value="Ensembl"/>
</dbReference>
<dbReference type="GO" id="GO:0030670">
    <property type="term" value="C:phagocytic vesicle membrane"/>
    <property type="evidence" value="ECO:0000304"/>
    <property type="project" value="Reactome"/>
</dbReference>
<dbReference type="GO" id="GO:0005886">
    <property type="term" value="C:plasma membrane"/>
    <property type="evidence" value="ECO:0000314"/>
    <property type="project" value="UniProtKB"/>
</dbReference>
<dbReference type="GO" id="GO:0030141">
    <property type="term" value="C:secretory granule"/>
    <property type="evidence" value="ECO:0000304"/>
    <property type="project" value="BHF-UCL"/>
</dbReference>
<dbReference type="GO" id="GO:0035579">
    <property type="term" value="C:specific granule membrane"/>
    <property type="evidence" value="ECO:0000304"/>
    <property type="project" value="Reactome"/>
</dbReference>
<dbReference type="GO" id="GO:0001725">
    <property type="term" value="C:stress fiber"/>
    <property type="evidence" value="ECO:0007669"/>
    <property type="project" value="Ensembl"/>
</dbReference>
<dbReference type="GO" id="GO:0070821">
    <property type="term" value="C:tertiary granule membrane"/>
    <property type="evidence" value="ECO:0000304"/>
    <property type="project" value="Reactome"/>
</dbReference>
<dbReference type="GO" id="GO:0009055">
    <property type="term" value="F:electron transfer activity"/>
    <property type="evidence" value="ECO:0000314"/>
    <property type="project" value="BHF-UCL"/>
</dbReference>
<dbReference type="GO" id="GO:0020037">
    <property type="term" value="F:heme binding"/>
    <property type="evidence" value="ECO:0007669"/>
    <property type="project" value="InterPro"/>
</dbReference>
<dbReference type="GO" id="GO:0046872">
    <property type="term" value="F:metal ion binding"/>
    <property type="evidence" value="ECO:0007669"/>
    <property type="project" value="UniProtKB-KW"/>
</dbReference>
<dbReference type="GO" id="GO:0046982">
    <property type="term" value="F:protein heterodimerization activity"/>
    <property type="evidence" value="ECO:0000353"/>
    <property type="project" value="BHF-UCL"/>
</dbReference>
<dbReference type="GO" id="GO:0017124">
    <property type="term" value="F:SH3 domain binding"/>
    <property type="evidence" value="ECO:0000353"/>
    <property type="project" value="BHF-UCL"/>
</dbReference>
<dbReference type="GO" id="GO:0016175">
    <property type="term" value="F:superoxide-generating NAD(P)H oxidase activity"/>
    <property type="evidence" value="ECO:0007669"/>
    <property type="project" value="Ensembl"/>
</dbReference>
<dbReference type="GO" id="GO:1904385">
    <property type="term" value="P:cellular response to angiotensin"/>
    <property type="evidence" value="ECO:0007669"/>
    <property type="project" value="Ensembl"/>
</dbReference>
<dbReference type="GO" id="GO:0071480">
    <property type="term" value="P:cellular response to gamma radiation"/>
    <property type="evidence" value="ECO:0007669"/>
    <property type="project" value="Ensembl"/>
</dbReference>
<dbReference type="GO" id="GO:0071333">
    <property type="term" value="P:cellular response to glucose stimulus"/>
    <property type="evidence" value="ECO:0007669"/>
    <property type="project" value="Ensembl"/>
</dbReference>
<dbReference type="GO" id="GO:1904845">
    <property type="term" value="P:cellular response to L-glutamine"/>
    <property type="evidence" value="ECO:0007669"/>
    <property type="project" value="Ensembl"/>
</dbReference>
<dbReference type="GO" id="GO:0071260">
    <property type="term" value="P:cellular response to mechanical stimulus"/>
    <property type="evidence" value="ECO:0007669"/>
    <property type="project" value="Ensembl"/>
</dbReference>
<dbReference type="GO" id="GO:0071356">
    <property type="term" value="P:cellular response to tumor necrosis factor"/>
    <property type="evidence" value="ECO:0007669"/>
    <property type="project" value="Ensembl"/>
</dbReference>
<dbReference type="GO" id="GO:0017004">
    <property type="term" value="P:cytochrome complex assembly"/>
    <property type="evidence" value="ECO:0000314"/>
    <property type="project" value="BHF-UCL"/>
</dbReference>
<dbReference type="GO" id="GO:0051649">
    <property type="term" value="P:establishment of localization in cell"/>
    <property type="evidence" value="ECO:0007669"/>
    <property type="project" value="Ensembl"/>
</dbReference>
<dbReference type="GO" id="GO:0050665">
    <property type="term" value="P:hydrogen peroxide biosynthetic process"/>
    <property type="evidence" value="ECO:0000250"/>
    <property type="project" value="BHF-UCL"/>
</dbReference>
<dbReference type="GO" id="GO:0006954">
    <property type="term" value="P:inflammatory response"/>
    <property type="evidence" value="ECO:0000315"/>
    <property type="project" value="BHF-UCL"/>
</dbReference>
<dbReference type="GO" id="GO:0045087">
    <property type="term" value="P:innate immune response"/>
    <property type="evidence" value="ECO:0000315"/>
    <property type="project" value="BHF-UCL"/>
</dbReference>
<dbReference type="GO" id="GO:0070254">
    <property type="term" value="P:mucus secretion"/>
    <property type="evidence" value="ECO:0007669"/>
    <property type="project" value="Ensembl"/>
</dbReference>
<dbReference type="GO" id="GO:0003106">
    <property type="term" value="P:negative regulation of glomerular filtration by angiotensin"/>
    <property type="evidence" value="ECO:0007669"/>
    <property type="project" value="Ensembl"/>
</dbReference>
<dbReference type="GO" id="GO:0030307">
    <property type="term" value="P:positive regulation of cell growth"/>
    <property type="evidence" value="ECO:0007669"/>
    <property type="project" value="Ensembl"/>
</dbReference>
<dbReference type="GO" id="GO:1900426">
    <property type="term" value="P:positive regulation of defense response to bacterium"/>
    <property type="evidence" value="ECO:0000314"/>
    <property type="project" value="UniProtKB"/>
</dbReference>
<dbReference type="GO" id="GO:0001938">
    <property type="term" value="P:positive regulation of endothelial cell proliferation"/>
    <property type="evidence" value="ECO:0007669"/>
    <property type="project" value="Ensembl"/>
</dbReference>
<dbReference type="GO" id="GO:0032755">
    <property type="term" value="P:positive regulation of interleukin-6 production"/>
    <property type="evidence" value="ECO:0000314"/>
    <property type="project" value="UniProtKB"/>
</dbReference>
<dbReference type="GO" id="GO:0070257">
    <property type="term" value="P:positive regulation of mucus secretion"/>
    <property type="evidence" value="ECO:0007669"/>
    <property type="project" value="Ensembl"/>
</dbReference>
<dbReference type="GO" id="GO:0050766">
    <property type="term" value="P:positive regulation of phagocytosis"/>
    <property type="evidence" value="ECO:0000314"/>
    <property type="project" value="UniProtKB"/>
</dbReference>
<dbReference type="GO" id="GO:1903428">
    <property type="term" value="P:positive regulation of reactive oxygen species biosynthetic process"/>
    <property type="evidence" value="ECO:0000314"/>
    <property type="project" value="UniProtKB"/>
</dbReference>
<dbReference type="GO" id="GO:0048661">
    <property type="term" value="P:positive regulation of smooth muscle cell proliferation"/>
    <property type="evidence" value="ECO:0007669"/>
    <property type="project" value="Ensembl"/>
</dbReference>
<dbReference type="GO" id="GO:0032930">
    <property type="term" value="P:positive regulation of superoxide anion generation"/>
    <property type="evidence" value="ECO:0007669"/>
    <property type="project" value="Ensembl"/>
</dbReference>
<dbReference type="GO" id="GO:0034137">
    <property type="term" value="P:positive regulation of toll-like receptor 2 signaling pathway"/>
    <property type="evidence" value="ECO:0000314"/>
    <property type="project" value="UniProtKB"/>
</dbReference>
<dbReference type="GO" id="GO:0032760">
    <property type="term" value="P:positive regulation of tumor necrosis factor production"/>
    <property type="evidence" value="ECO:0000314"/>
    <property type="project" value="UniProtKB"/>
</dbReference>
<dbReference type="GO" id="GO:0051279">
    <property type="term" value="P:regulation of release of sequestered calcium ion into cytosol"/>
    <property type="evidence" value="ECO:0007669"/>
    <property type="project" value="Ensembl"/>
</dbReference>
<dbReference type="GO" id="GO:0045730">
    <property type="term" value="P:respiratory burst"/>
    <property type="evidence" value="ECO:0000315"/>
    <property type="project" value="BHF-UCL"/>
</dbReference>
<dbReference type="GO" id="GO:0014823">
    <property type="term" value="P:response to activity"/>
    <property type="evidence" value="ECO:0007669"/>
    <property type="project" value="Ensembl"/>
</dbReference>
<dbReference type="GO" id="GO:1904044">
    <property type="term" value="P:response to aldosterone"/>
    <property type="evidence" value="ECO:0007669"/>
    <property type="project" value="Ensembl"/>
</dbReference>
<dbReference type="GO" id="GO:0001666">
    <property type="term" value="P:response to hypoxia"/>
    <property type="evidence" value="ECO:0007669"/>
    <property type="project" value="Ensembl"/>
</dbReference>
<dbReference type="GO" id="GO:0070555">
    <property type="term" value="P:response to interleukin-1"/>
    <property type="evidence" value="ECO:0007669"/>
    <property type="project" value="Ensembl"/>
</dbReference>
<dbReference type="GO" id="GO:0031667">
    <property type="term" value="P:response to nutrient levels"/>
    <property type="evidence" value="ECO:0007669"/>
    <property type="project" value="Ensembl"/>
</dbReference>
<dbReference type="GO" id="GO:0009410">
    <property type="term" value="P:response to xenobiotic stimulus"/>
    <property type="evidence" value="ECO:0007669"/>
    <property type="project" value="Ensembl"/>
</dbReference>
<dbReference type="GO" id="GO:0014895">
    <property type="term" value="P:smooth muscle hypertrophy"/>
    <property type="evidence" value="ECO:0000250"/>
    <property type="project" value="BHF-UCL"/>
</dbReference>
<dbReference type="GO" id="GO:0042554">
    <property type="term" value="P:superoxide anion generation"/>
    <property type="evidence" value="ECO:0000314"/>
    <property type="project" value="UniProtKB"/>
</dbReference>
<dbReference type="GO" id="GO:0006801">
    <property type="term" value="P:superoxide metabolic process"/>
    <property type="evidence" value="ECO:0000315"/>
    <property type="project" value="BHF-UCL"/>
</dbReference>
<dbReference type="IDEAL" id="IID00596"/>
<dbReference type="InterPro" id="IPR007732">
    <property type="entry name" value="Cyt_b558_asu"/>
</dbReference>
<dbReference type="PANTHER" id="PTHR15168">
    <property type="entry name" value="CYTOCHROME B-245 LIGHT CHAIN"/>
    <property type="match status" value="1"/>
</dbReference>
<dbReference type="PANTHER" id="PTHR15168:SF0">
    <property type="entry name" value="CYTOCHROME B-245 LIGHT CHAIN"/>
    <property type="match status" value="1"/>
</dbReference>
<dbReference type="Pfam" id="PF05038">
    <property type="entry name" value="Cytochrom_B558a"/>
    <property type="match status" value="1"/>
</dbReference>
<dbReference type="PIRSF" id="PIRSF019635">
    <property type="entry name" value="Cytochr_b558a"/>
    <property type="match status" value="1"/>
</dbReference>
<accession>P13498</accession>
<accession>Q14090</accession>
<accession>Q9BR72</accession>
<gene>
    <name evidence="34" type="primary">CYBA</name>
</gene>
<name>CY24A_HUMAN</name>
<reference key="1">
    <citation type="journal article" date="1988" name="Proc. Natl. Acad. Sci. U.S.A.">
        <title>Primary structure and unique expression of the 22-kilodalton light chain of human neutrophil cytochrome b.</title>
        <authorList>
            <person name="Parkos C.A."/>
            <person name="Dinauer M.C."/>
            <person name="Walker L.E."/>
            <person name="Allen R.A."/>
            <person name="Jesaitis A.J."/>
            <person name="Orkin S.H."/>
        </authorList>
    </citation>
    <scope>NUCLEOTIDE SEQUENCE [MRNA]</scope>
    <scope>PROTEIN SEQUENCE OF 2-26</scope>
    <scope>VARIANTS HIS-72 AND ALA-174</scope>
</reference>
<reference key="2">
    <citation type="submission" date="2003-05" db="EMBL/GenBank/DDBJ databases">
        <title>Cloning of human full-length CDSs in BD Creator(TM) system donor vector.</title>
        <authorList>
            <person name="Kalnine N."/>
            <person name="Chen X."/>
            <person name="Rolfs A."/>
            <person name="Halleck A."/>
            <person name="Hines L."/>
            <person name="Eisenstein S."/>
            <person name="Koundinya M."/>
            <person name="Raphael J."/>
            <person name="Moreira D."/>
            <person name="Kelley T."/>
            <person name="LaBaer J."/>
            <person name="Lin Y."/>
            <person name="Phelan M."/>
            <person name="Farmer A."/>
        </authorList>
    </citation>
    <scope>NUCLEOTIDE SEQUENCE [LARGE SCALE MRNA]</scope>
    <scope>VARIANT ALA-174</scope>
</reference>
<reference key="3">
    <citation type="journal article" date="2004" name="Nature">
        <title>The sequence and analysis of duplication-rich human chromosome 16.</title>
        <authorList>
            <person name="Martin J."/>
            <person name="Han C."/>
            <person name="Gordon L.A."/>
            <person name="Terry A."/>
            <person name="Prabhakar S."/>
            <person name="She X."/>
            <person name="Xie G."/>
            <person name="Hellsten U."/>
            <person name="Chan Y.M."/>
            <person name="Altherr M."/>
            <person name="Couronne O."/>
            <person name="Aerts A."/>
            <person name="Bajorek E."/>
            <person name="Black S."/>
            <person name="Blumer H."/>
            <person name="Branscomb E."/>
            <person name="Brown N.C."/>
            <person name="Bruno W.J."/>
            <person name="Buckingham J.M."/>
            <person name="Callen D.F."/>
            <person name="Campbell C.S."/>
            <person name="Campbell M.L."/>
            <person name="Campbell E.W."/>
            <person name="Caoile C."/>
            <person name="Challacombe J.F."/>
            <person name="Chasteen L.A."/>
            <person name="Chertkov O."/>
            <person name="Chi H.C."/>
            <person name="Christensen M."/>
            <person name="Clark L.M."/>
            <person name="Cohn J.D."/>
            <person name="Denys M."/>
            <person name="Detter J.C."/>
            <person name="Dickson M."/>
            <person name="Dimitrijevic-Bussod M."/>
            <person name="Escobar J."/>
            <person name="Fawcett J.J."/>
            <person name="Flowers D."/>
            <person name="Fotopulos D."/>
            <person name="Glavina T."/>
            <person name="Gomez M."/>
            <person name="Gonzales E."/>
            <person name="Goodstein D."/>
            <person name="Goodwin L.A."/>
            <person name="Grady D.L."/>
            <person name="Grigoriev I."/>
            <person name="Groza M."/>
            <person name="Hammon N."/>
            <person name="Hawkins T."/>
            <person name="Haydu L."/>
            <person name="Hildebrand C.E."/>
            <person name="Huang W."/>
            <person name="Israni S."/>
            <person name="Jett J."/>
            <person name="Jewett P.B."/>
            <person name="Kadner K."/>
            <person name="Kimball H."/>
            <person name="Kobayashi A."/>
            <person name="Krawczyk M.-C."/>
            <person name="Leyba T."/>
            <person name="Longmire J.L."/>
            <person name="Lopez F."/>
            <person name="Lou Y."/>
            <person name="Lowry S."/>
            <person name="Ludeman T."/>
            <person name="Manohar C.F."/>
            <person name="Mark G.A."/>
            <person name="McMurray K.L."/>
            <person name="Meincke L.J."/>
            <person name="Morgan J."/>
            <person name="Moyzis R.K."/>
            <person name="Mundt M.O."/>
            <person name="Munk A.C."/>
            <person name="Nandkeshwar R.D."/>
            <person name="Pitluck S."/>
            <person name="Pollard M."/>
            <person name="Predki P."/>
            <person name="Parson-Quintana B."/>
            <person name="Ramirez L."/>
            <person name="Rash S."/>
            <person name="Retterer J."/>
            <person name="Ricke D.O."/>
            <person name="Robinson D.L."/>
            <person name="Rodriguez A."/>
            <person name="Salamov A."/>
            <person name="Saunders E.H."/>
            <person name="Scott D."/>
            <person name="Shough T."/>
            <person name="Stallings R.L."/>
            <person name="Stalvey M."/>
            <person name="Sutherland R.D."/>
            <person name="Tapia R."/>
            <person name="Tesmer J.G."/>
            <person name="Thayer N."/>
            <person name="Thompson L.S."/>
            <person name="Tice H."/>
            <person name="Torney D.C."/>
            <person name="Tran-Gyamfi M."/>
            <person name="Tsai M."/>
            <person name="Ulanovsky L.E."/>
            <person name="Ustaszewska A."/>
            <person name="Vo N."/>
            <person name="White P.S."/>
            <person name="Williams A.L."/>
            <person name="Wills P.L."/>
            <person name="Wu J.-R."/>
            <person name="Wu K."/>
            <person name="Yang J."/>
            <person name="DeJong P."/>
            <person name="Bruce D."/>
            <person name="Doggett N.A."/>
            <person name="Deaven L."/>
            <person name="Schmutz J."/>
            <person name="Grimwood J."/>
            <person name="Richardson P."/>
            <person name="Rokhsar D.S."/>
            <person name="Eichler E.E."/>
            <person name="Gilna P."/>
            <person name="Lucas S.M."/>
            <person name="Myers R.M."/>
            <person name="Rubin E.M."/>
            <person name="Pennacchio L.A."/>
        </authorList>
    </citation>
    <scope>NUCLEOTIDE SEQUENCE [LARGE SCALE GENOMIC DNA]</scope>
</reference>
<reference key="4">
    <citation type="journal article" date="2004" name="Genome Res.">
        <title>The status, quality, and expansion of the NIH full-length cDNA project: the Mammalian Gene Collection (MGC).</title>
        <authorList>
            <consortium name="The MGC Project Team"/>
        </authorList>
    </citation>
    <scope>NUCLEOTIDE SEQUENCE [LARGE SCALE MRNA]</scope>
    <scope>VARIANT ALA-174</scope>
    <source>
        <tissue>Brain</tissue>
    </source>
</reference>
<reference key="5">
    <citation type="journal article" date="1990" name="J. Clin. Invest.">
        <title>Human neutrophil cytochrome b light chain (p22-phox). Gene structure, chromosomal location, and mutations in cytochrome-negative autosomal recessive chronic granulomatous disease.</title>
        <authorList>
            <person name="Dinauer M.C."/>
            <person name="Pierce E.A."/>
            <person name="Bruns G.A.P."/>
            <person name="Curnutte J.T."/>
            <person name="Orkin S.H."/>
        </authorList>
    </citation>
    <scope>NUCLEOTIDE SEQUENCE [GENOMIC DNA] OF 12-123</scope>
    <scope>VARIANT CGD4 ARG-118</scope>
</reference>
<reference key="6">
    <citation type="journal article" date="1989" name="Blood">
        <title>Characterization of two monoclonal antibodies against cytochrome b558 of human neutrophils.</title>
        <authorList>
            <person name="Verhoeven A.J."/>
            <person name="Bolscher B.G."/>
            <person name="Meerhof L.J."/>
            <person name="van Zwieten R."/>
            <person name="Keijer J."/>
            <person name="Weening R.S."/>
            <person name="Roos D."/>
        </authorList>
    </citation>
    <scope>NUCLEOTIDE SEQUENCE [MRNA] OF 51-195</scope>
    <scope>VARIANTS HIS-72 AND ALA-174</scope>
</reference>
<reference key="7">
    <citation type="journal article" date="2003" name="J. Biol. Chem.">
        <title>Novel human homologues of p47phox and p67phox participate in activation of superoxide-producing NADPH oxidases.</title>
        <authorList>
            <person name="Takeya R."/>
            <person name="Ueno N."/>
            <person name="Kami K."/>
            <person name="Taura M."/>
            <person name="Kohjima M."/>
            <person name="Izaki T."/>
            <person name="Nunoi H."/>
            <person name="Sumimoto H."/>
        </authorList>
    </citation>
    <scope>INTERACTION WITH NOXO1</scope>
    <scope>MUTAGENESIS OF PRO-157</scope>
</reference>
<reference key="8">
    <citation type="journal article" date="2004" name="J. Biol. Chem.">
        <title>Direct interaction of the novel Nox proteins with p22phox is required for the formation of a functionally active NADPH oxidase.</title>
        <authorList>
            <person name="Ambasta R.K."/>
            <person name="Kumar P."/>
            <person name="Griendling K.K."/>
            <person name="Schmidt H.H.H.W."/>
            <person name="Busse R."/>
            <person name="Brandes R.P."/>
        </authorList>
    </citation>
    <scope>INTERACTION WITH NOX1</scope>
</reference>
<reference key="9">
    <citation type="journal article" date="2004" name="J. Immunol.">
        <title>Site-specific inhibitors of NADPH oxidase activity and structural probes of flavocytochrome b: characterization of six monoclonal antibodies to the p22phox subunit.</title>
        <authorList>
            <person name="Taylor R.M."/>
            <person name="Burritt J.B."/>
            <person name="Baniulis D."/>
            <person name="Foubert T.R."/>
            <person name="Lord C.I."/>
            <person name="Dinauer M.C."/>
            <person name="Parkos C.A."/>
            <person name="Jesaitis A.J."/>
        </authorList>
    </citation>
    <scope>SUBCELLULAR LOCATION</scope>
    <scope>MEMBRANE TOPOLOGY</scope>
</reference>
<reference key="10">
    <citation type="journal article" date="2005" name="J. Biol. Chem.">
        <title>Identification of a novel partner of duox: EFP1, a thioredoxin-related protein.</title>
        <authorList>
            <person name="Wang D."/>
            <person name="De Deken X."/>
            <person name="Milenkovic M."/>
            <person name="Song Y."/>
            <person name="Pirson I."/>
            <person name="Dumont J.E."/>
            <person name="Miot F."/>
        </authorList>
    </citation>
    <scope>INTERACTION WITH DUOX1; DUOX2 AND TPO</scope>
</reference>
<reference key="11">
    <citation type="journal article" date="2005" name="J. Biol. Chem.">
        <title>The NADPH oxidase Nox3 constitutively produces superoxide in a p22phox-dependent manner: its regulation by oxidase organizers and activators.</title>
        <authorList>
            <person name="Ueno N."/>
            <person name="Takeya R."/>
            <person name="Miyano K."/>
            <person name="Kikuchi H."/>
            <person name="Sumimoto H."/>
        </authorList>
    </citation>
    <scope>FUNCTION</scope>
    <scope>INTERACTION WITH NOX3</scope>
</reference>
<reference key="12">
    <citation type="journal article" date="2006" name="Cell. Signal.">
        <title>Functional analysis of Nox4 reveals unique characteristics compared to other NADPH oxidases.</title>
        <authorList>
            <person name="Martyn K.D."/>
            <person name="Frederick L.M."/>
            <person name="von Loehneysen K."/>
            <person name="Dinauer M.C."/>
            <person name="Knaus U.G."/>
        </authorList>
    </citation>
    <scope>INTERACTION WITH NOX4</scope>
</reference>
<reference key="13">
    <citation type="journal article" date="2007" name="Biochem. J.">
        <title>Critical roles for p22phox in the structural maturation and subcellular targeting of Nox3.</title>
        <authorList>
            <person name="Nakano Y."/>
            <person name="Banfi B."/>
            <person name="Jesaitis A.J."/>
            <person name="Dinauer M.C."/>
            <person name="Allen L.A."/>
            <person name="Nauseef W.M."/>
        </authorList>
    </citation>
    <scope>FUNCTION</scope>
    <scope>INTERACTION WITH NOX3 AND NOXO1</scope>
    <scope>SUBCELLULAR LOCATION</scope>
</reference>
<reference key="14">
    <citation type="journal article" date="2010" name="J. Biol. Chem.">
        <title>Phosphorylation of p22phox on threonine 147 enhances NADPH oxidase activity by promoting p47phox binding.</title>
        <authorList>
            <person name="Lewis E.M."/>
            <person name="Sergeant S."/>
            <person name="Ledford B."/>
            <person name="Stull N."/>
            <person name="Dinauer M.C."/>
            <person name="McPhail L.C."/>
        </authorList>
    </citation>
    <scope>FUNCTION</scope>
    <scope>PHOSPHORYLATION AT THR-147</scope>
</reference>
<reference key="15">
    <citation type="journal article" date="2012" name="PLoS ONE">
        <title>Molecular interface of S100A8 with cytochrome b and NADPH oxidase activation.</title>
        <authorList>
            <person name="Berthier S."/>
            <person name="Nguyen M.V."/>
            <person name="Baillet A."/>
            <person name="Hograindleur M.A."/>
            <person name="Paclet M.H."/>
            <person name="Polack B."/>
            <person name="Morel F."/>
        </authorList>
    </citation>
    <scope>SUBCELLULAR LOCATION</scope>
    <scope>INTERACTION WITH CALPROTECTIN</scope>
</reference>
<reference key="16">
    <citation type="journal article" date="2013" name="J. Proteome Res.">
        <title>Toward a comprehensive characterization of a human cancer cell phosphoproteome.</title>
        <authorList>
            <person name="Zhou H."/>
            <person name="Di Palma S."/>
            <person name="Preisinger C."/>
            <person name="Peng M."/>
            <person name="Polat A.N."/>
            <person name="Heck A.J."/>
            <person name="Mohammed S."/>
        </authorList>
    </citation>
    <scope>PHOSPHORYLATION [LARGE SCALE ANALYSIS] AT THR-147</scope>
    <scope>IDENTIFICATION BY MASS SPECTROMETRY [LARGE SCALE ANALYSIS]</scope>
    <source>
        <tissue>Erythroleukemia</tissue>
    </source>
</reference>
<reference evidence="35" key="17">
    <citation type="journal article" date="2006" name="J. Biol. Chem.">
        <title>NMR solution structure of the tandem Src homology 3 domains of p47phox complexed with a p22phox-derived proline-rich peptide.</title>
        <authorList>
            <person name="Ogura K."/>
            <person name="Nobuhisa I."/>
            <person name="Yuzawa S."/>
            <person name="Takeya R."/>
            <person name="Torikai S."/>
            <person name="Saikawa K."/>
            <person name="Sumimoto H."/>
            <person name="Inagaki F."/>
        </authorList>
    </citation>
    <scope>STRUCTURE BY NMR OF 149-167 IN COMPLEX WITH NCF1</scope>
    <scope>INTERACTION WITH NCF1</scope>
</reference>
<reference evidence="37" key="18">
    <citation type="journal article" date="2022" name="Elife">
        <title>Structure of human phagocyte NADPH oxidase in the resting state.</title>
        <authorList>
            <person name="Liu R."/>
            <person name="Song K."/>
            <person name="Wu J.X."/>
            <person name="Geng X.P."/>
            <person name="Zheng L."/>
            <person name="Gao X."/>
            <person name="Peng H."/>
            <person name="Chen L."/>
        </authorList>
    </citation>
    <scope>STRUCTURE BY ELECTRON MICROSCOPY (3.30 ANGSTROMS) OF 1-195 IN COMPLEX WITH CYBB</scope>
    <scope>TOPOLOGY</scope>
</reference>
<reference evidence="36" key="19">
    <citation type="journal article" date="2022" name="Nat. Commun.">
        <title>Structure of the core human NADPH oxidase NOX2.</title>
        <authorList>
            <person name="Noreng S."/>
            <person name="Ota N."/>
            <person name="Sun Y."/>
            <person name="Ho H."/>
            <person name="Johnson M."/>
            <person name="Arthur C.P."/>
            <person name="Schneider K."/>
            <person name="Lehoux I."/>
            <person name="Davies C.W."/>
            <person name="Mortara K."/>
            <person name="Wong K."/>
            <person name="Seshasayee D."/>
            <person name="Masureel M."/>
            <person name="Payandeh J."/>
            <person name="Yi T."/>
            <person name="Koerber J.T."/>
        </authorList>
    </citation>
    <scope>STRUCTURE BY ELECTRON MICROSCOPY (3.20 ANGSTROMS) OF 1-195 IN COMPLEX WITH CYBB</scope>
    <scope>SUBUNIT</scope>
    <scope>TOPOLOGY</scope>
</reference>
<reference evidence="38 39" key="20">
    <citation type="journal article" date="2024" name="Nature">
        <title>Structure of human phagocyte NADPH oxidase in the activated state.</title>
        <authorList>
            <person name="Liu X."/>
            <person name="Shi Y."/>
            <person name="Liu R."/>
            <person name="Song K."/>
            <person name="Chen L."/>
        </authorList>
    </citation>
    <scope>STRUCTURE BY ELECTRON MICROSCOPY (2.29 ANGSTROMS) OF 1-195 IN COMPLEX WITH CYBB; NFC1; NFC2 AND RAC1</scope>
    <scope>IDENTIFICATION OF THE NADPH OXIDASE COMPLEX</scope>
    <scope>FUNCTION</scope>
</reference>
<reference key="21">
    <citation type="journal article" date="1992" name="Am. J. Hum. Genet.">
        <title>Cytochrome b558-negative, autosomal recessive chronic granulomatous disease: two new mutations in the cytochrome b558 light chain of the NADPH oxidase (p22-phox).</title>
        <authorList>
            <person name="de Boer M."/>
            <person name="de Klein A."/>
            <person name="Hossle J.-P."/>
            <person name="Seger R."/>
            <person name="Corbeel L."/>
            <person name="Weening R.S."/>
            <person name="Roos D."/>
        </authorList>
    </citation>
    <scope>INVOLVEMENT IN CGD4</scope>
    <scope>VARIANTS CGD4 GLN-90 AND ARG-94</scope>
</reference>
<reference key="22">
    <citation type="journal article" date="1991" name="Proc. Natl. Acad. Sci. U.S.A.">
        <title>Point mutation in the cytoplasmic domain of the neutrophil p22-phox cytochrome b subunit is associated with a nonfunctional NADPH oxidase and chronic granulomatous disease.</title>
        <authorList>
            <person name="Dinauer M.C."/>
            <person name="Pierce E.A."/>
            <person name="Erickson R.W."/>
            <person name="Muhlebach T.J."/>
            <person name="Messner H."/>
            <person name="Orkin S.H."/>
            <person name="Seger R.A."/>
            <person name="Curnutte J.T."/>
        </authorList>
    </citation>
    <scope>VARIANT CGD4 GLN-156</scope>
</reference>
<reference key="23">
    <citation type="journal article" date="1994" name="Hum. Genet.">
        <title>Identification of allele-specific p22-phox mutations in a compound heterozygous patient with chronic granulomatous disease by mismatch PCR and restriction enzyme analysis.</title>
        <authorList>
            <person name="Hossle J.-P."/>
            <person name="de Boer M."/>
            <person name="Seger R.A."/>
            <person name="Roos D."/>
        </authorList>
    </citation>
    <scope>VARIANT CGD4 VAL-53</scope>
</reference>
<reference key="24">
    <citation type="journal article" date="1994" name="J. Exp. Med.">
        <title>156Pro--&gt;Gln substitution in the light chain of cytochrome b558 of the human NADPH oxidase (p22-phox) leads to defective translocation of the cytosolic proteins p47-phox and p67-phox.</title>
        <authorList>
            <person name="Leusen J.H."/>
            <person name="Bolscher B.G."/>
            <person name="Hilarius P.M."/>
            <person name="Weening R.S."/>
            <person name="Kaulfersch W."/>
            <person name="Seger R.A."/>
            <person name="Roos D."/>
            <person name="Verhoeven A.J."/>
        </authorList>
    </citation>
    <scope>VARIANT CGD4 GLN-156</scope>
</reference>
<reference key="25">
    <citation type="journal article" date="2000" name="Blood">
        <title>Molecular analysis of 9 new families with chronic granulomatous disease caused by mutations in CYBA, the gene encoding p22(phox).</title>
        <authorList>
            <person name="Rae J."/>
            <person name="Noack D."/>
            <person name="Heyworth P.G."/>
            <person name="Ellis B.A."/>
            <person name="Curnutte J.T."/>
            <person name="Cross A.R."/>
        </authorList>
    </citation>
    <scope>VARIANTS CGD4 ARG-24; VAL-25; PRO-52; TRP-90 AND ARG-118</scope>
</reference>
<reference key="26">
    <citation type="journal article" date="2000" name="Br. J. Haematol.">
        <title>Genetic studies of three Japanese patients with p22-phox-deficient chronic granulomatous disease: detection of a possible common mutant CYBA allele in Japan and a genotype-phenotype correlation in these patients.</title>
        <authorList>
            <person name="Yamada M."/>
            <person name="Ariga T."/>
            <person name="Kawamura N."/>
            <person name="Ohtsu M."/>
            <person name="Imajoh-Ohmi S."/>
            <person name="Ohshika E."/>
            <person name="Tatsuzawa O."/>
            <person name="Kobayashi K."/>
            <person name="Sakiyama Y."/>
        </authorList>
    </citation>
    <scope>VARIANT CGD4 ARG-24</scope>
</reference>
<reference key="27">
    <citation type="journal article" date="2000" name="Hum. Genet.">
        <title>Statistical and mutational analysis of chronic granulomatous disease in Japan with special reference to gp91-phox and p22-phox deficiency.</title>
        <authorList>
            <person name="Ishibashi F."/>
            <person name="Nunoi H."/>
            <person name="Endo F."/>
            <person name="Matsuda I."/>
            <person name="Kanegasaki S."/>
        </authorList>
    </citation>
    <scope>VARIANTS CGD4 ARG-24 AND VAL-124</scope>
</reference>
<reference key="28">
    <citation type="journal article" date="2008" name="Br. J. Haematol.">
        <title>Characterization of six novel mutations in CYBA: the gene causing autosomal recessive chronic granulomatous disease.</title>
        <authorList>
            <person name="Teimourian S."/>
            <person name="Zomorodian E."/>
            <person name="Badalzadeh M."/>
            <person name="Pouya A."/>
            <person name="Kannengiesser C."/>
            <person name="Mansouri D."/>
            <person name="Cheraghi T."/>
            <person name="Parvaneh N."/>
        </authorList>
    </citation>
    <scope>VARIANT CGD4 THR-125</scope>
</reference>
<reference key="29">
    <citation type="journal article" date="2009" name="Hum. Mutat.">
        <title>Three common polymorphisms in the CYBA gene form a haplotype associated with decreased ROS generation.</title>
        <authorList>
            <person name="Bedard K."/>
            <person name="Attar H."/>
            <person name="Bonnefont J."/>
            <person name="Jaquet V."/>
            <person name="Borel C."/>
            <person name="Plastre O."/>
            <person name="Stasia M.-J."/>
            <person name="Antonarakis S.E."/>
            <person name="Krause K.-H."/>
        </authorList>
    </citation>
    <scope>VARIANTS HIS-72; GLY-171; ALA-174 AND ASP-193</scope>
</reference>
<reference key="30">
    <citation type="journal article" date="2013" name="J. Allergy Clin. Immunol.">
        <title>Clinical, functional, and genetic characterization of chronic granulomatous disease in 89 Turkish patients.</title>
        <authorList>
            <person name="Koker M.Y."/>
            <person name="Camcioglu Y."/>
            <person name="van Leeuwen K."/>
            <person name="Kilic S.S."/>
            <person name="Barlan I."/>
            <person name="Yilmaz M."/>
            <person name="Metin A."/>
            <person name="de Boer M."/>
            <person name="Avcilar H."/>
            <person name="Patiroglu T."/>
            <person name="Yildiran A."/>
            <person name="Yegin O."/>
            <person name="Tezcan I."/>
            <person name="Sanal O."/>
            <person name="Roos D."/>
        </authorList>
    </citation>
    <scope>VARIANTS CGD4 ARG-24; ASP-25; VAL-124 AND THR-125</scope>
</reference>
<proteinExistence type="evidence at protein level"/>
<feature type="initiator methionine" description="Removed" evidence="24">
    <location>
        <position position="1"/>
    </location>
</feature>
<feature type="chain" id="PRO_0000144907" description="Cytochrome b-245 light chain">
    <location>
        <begin position="2"/>
        <end position="195"/>
    </location>
</feature>
<feature type="topological domain" description="Cytoplasmic" evidence="32 33">
    <location>
        <begin position="2"/>
        <end position="7"/>
    </location>
</feature>
<feature type="transmembrane region" description="Helical" evidence="25 26 36 37">
    <location>
        <begin position="8"/>
        <end position="30"/>
    </location>
</feature>
<feature type="topological domain" description="Extracellular" evidence="32 33">
    <location>
        <begin position="31"/>
        <end position="35"/>
    </location>
</feature>
<feature type="transmembrane region" description="Helical" evidence="25 26 36 37">
    <location>
        <begin position="36"/>
        <end position="53"/>
    </location>
</feature>
<feature type="topological domain" description="Cytoplasmic" evidence="32 33">
    <location>
        <begin position="54"/>
        <end position="69"/>
    </location>
</feature>
<feature type="intramembrane region" evidence="32">
    <location>
        <begin position="70"/>
        <end position="80"/>
    </location>
</feature>
<feature type="topological domain" description="Cytoplasmic" evidence="32 33">
    <location>
        <begin position="81"/>
        <end position="86"/>
    </location>
</feature>
<feature type="transmembrane region" description="Helical" evidence="25 26 36 37">
    <location>
        <begin position="87"/>
        <end position="104"/>
    </location>
</feature>
<feature type="topological domain" description="Extracellular" evidence="32 33">
    <location>
        <position position="105"/>
    </location>
</feature>
<feature type="transmembrane region" description="Helical" evidence="25 26 36 37">
    <location>
        <begin position="106"/>
        <end position="126"/>
    </location>
</feature>
<feature type="topological domain" description="Cytoplasmic" evidence="32 33">
    <location>
        <begin position="127"/>
        <end position="195"/>
    </location>
</feature>
<feature type="region of interest" description="Disordered" evidence="2">
    <location>
        <begin position="134"/>
        <end position="195"/>
    </location>
</feature>
<feature type="modified residue" description="Phosphothreonine" evidence="19 40">
    <location>
        <position position="147"/>
    </location>
</feature>
<feature type="modified residue" description="Phosphoserine" evidence="1">
    <location>
        <position position="168"/>
    </location>
</feature>
<feature type="cross-link" description="Glycyl lysine isopeptide (Lys-Gly) (interchain with G-Cter in ubiquitin)" evidence="1">
    <location>
        <position position="149"/>
    </location>
</feature>
<feature type="sequence variant" id="VAR_012755" description="In CGD4; dbSNP:rs28941476." evidence="3 4 5 22">
    <original>G</original>
    <variation>R</variation>
    <location>
        <position position="24"/>
    </location>
</feature>
<feature type="sequence variant" id="VAR_071860" description="In CGD4; dbSNP:rs179363891." evidence="22">
    <original>G</original>
    <variation>D</variation>
    <location>
        <position position="25"/>
    </location>
</feature>
<feature type="sequence variant" id="VAR_060576" description="In CGD4; dbSNP:rs179363891." evidence="4">
    <original>G</original>
    <variation>V</variation>
    <location>
        <position position="25"/>
    </location>
</feature>
<feature type="sequence variant" id="VAR_060577" description="In CGD4; dbSNP:rs179363890." evidence="4">
    <original>L</original>
    <variation>P</variation>
    <location>
        <position position="52"/>
    </location>
</feature>
<feature type="sequence variant" id="VAR_060578" description="In CGD4; dbSNP:rs179363893." evidence="29">
    <original>E</original>
    <variation>V</variation>
    <location>
        <position position="53"/>
    </location>
</feature>
<feature type="sequence variant" id="VAR_005122" description="In dbSNP:rs4673." evidence="18 23 24">
    <original>Y</original>
    <variation>H</variation>
    <location>
        <position position="72"/>
    </location>
</feature>
<feature type="sequence variant" id="VAR_005123" description="In CGD4; dbSNP:rs104894513." evidence="7">
    <original>R</original>
    <variation>Q</variation>
    <location>
        <position position="90"/>
    </location>
</feature>
<feature type="sequence variant" id="VAR_060579" description="In CGD4; dbSNP:rs179363892." evidence="4">
    <original>R</original>
    <variation>W</variation>
    <location>
        <position position="90"/>
    </location>
</feature>
<feature type="sequence variant" id="VAR_005124" description="In CGD4; dbSNP:rs104894510." evidence="7">
    <original>H</original>
    <variation>R</variation>
    <location>
        <position position="94"/>
    </location>
</feature>
<feature type="sequence variant" id="VAR_005125" description="In CGD4; dbSNP:rs104894514." evidence="4 20">
    <original>S</original>
    <variation>R</variation>
    <location>
        <position position="118"/>
    </location>
</feature>
<feature type="sequence variant" id="VAR_060580" description="In CGD4; dbSNP:rs179363894." evidence="5 22">
    <original>A</original>
    <variation>V</variation>
    <location>
        <position position="124"/>
    </location>
</feature>
<feature type="sequence variant" id="VAR_060581" description="In CGD4; dbSNP:rs119103269." evidence="17 22">
    <original>A</original>
    <variation>T</variation>
    <location>
        <position position="125"/>
    </location>
</feature>
<feature type="sequence variant" id="VAR_005126" description="In CGD4; dbSNP:rs104894515." evidence="16 28">
    <original>P</original>
    <variation>Q</variation>
    <location>
        <position position="156"/>
    </location>
</feature>
<feature type="sequence variant" id="VAR_060582" description="In dbSNP:rs72667005." evidence="18">
    <original>E</original>
    <variation>G</variation>
    <location>
        <position position="171"/>
    </location>
</feature>
<feature type="sequence variant" id="VAR_054801" description="In dbSNP:rs1049254." evidence="9 18 23 24 30">
    <original>V</original>
    <variation>A</variation>
    <location>
        <position position="174"/>
    </location>
</feature>
<feature type="sequence variant" id="VAR_060583" description="In dbSNP:rs72667006." evidence="18">
    <original>E</original>
    <variation>D</variation>
    <location>
        <position position="193"/>
    </location>
</feature>
<feature type="mutagenesis site" description="Loss of interaction with NOXO1." evidence="6">
    <original>P</original>
    <variation>Q</variation>
    <location>
        <position position="157"/>
    </location>
</feature>
<feature type="helix" evidence="42">
    <location>
        <begin position="7"/>
        <end position="30"/>
    </location>
</feature>
<feature type="helix" evidence="42">
    <location>
        <begin position="36"/>
        <end position="53"/>
    </location>
</feature>
<feature type="strand" evidence="42">
    <location>
        <begin position="60"/>
        <end position="62"/>
    </location>
</feature>
<feature type="helix" evidence="42">
    <location>
        <begin position="70"/>
        <end position="77"/>
    </location>
</feature>
<feature type="helix" evidence="42">
    <location>
        <begin position="78"/>
        <end position="81"/>
    </location>
</feature>
<feature type="helix" evidence="42">
    <location>
        <begin position="82"/>
        <end position="85"/>
    </location>
</feature>
<feature type="helix" evidence="42">
    <location>
        <begin position="87"/>
        <end position="101"/>
    </location>
</feature>
<feature type="helix" evidence="42">
    <location>
        <begin position="105"/>
        <end position="126"/>
    </location>
</feature>
<feature type="helix" evidence="41">
    <location>
        <begin position="161"/>
        <end position="165"/>
    </location>
</feature>
<protein>
    <recommendedName>
        <fullName evidence="31">Cytochrome b-245 light chain</fullName>
    </recommendedName>
    <alternativeName>
        <fullName>Cytochrome b(558) alpha chain</fullName>
    </alternativeName>
    <alternativeName>
        <fullName>Cytochrome b558 subunit alpha</fullName>
    </alternativeName>
    <alternativeName>
        <fullName>Neutrophil cytochrome b 22 kDa polypeptide</fullName>
    </alternativeName>
    <alternativeName>
        <fullName>Superoxide-generating NADPH oxidase light chain subunit</fullName>
    </alternativeName>
    <alternativeName>
        <fullName>p22 phagocyte B-cytochrome</fullName>
    </alternativeName>
    <alternativeName>
        <fullName>p22-phox</fullName>
        <shortName>p22phox</shortName>
    </alternativeName>
</protein>
<comment type="function">
    <text evidence="12 15 19 27">Subunit of NADPH oxidase complexes that is required for the NADPH oxidase activity that generates, in various cell types, superoxide from molecular oxygen utilizing NADPH as an electron donor (PubMed:15824103, PubMed:17140397, PubMed:38355798). Subunit of the phagocyte NADPH oxidase complex that mediates the transfer of electrons from cytosolic NADPH to O2 to produce the superoxide anion (O2(-)) (PubMed:38355798). In the activated complex, electrons are first transferred from NADPH to flavin adenine dinucleotide (FAD) and subsequently transferred via two heme molecules to molecular oxygen, producing superoxide through an outer-sphere reaction (PubMed:38355798). Activation of the NADPH oxidase complex is initiated by the assembly of cytosolic subunits of the NADPH oxidase complex with the core NADPH oxidase complex to form a complex at the plasma membrane or phagosomal membrane (PubMed:38355798). This activation process is initiated by phosphorylation dependent binding of the cytosolic NCF1/p47-phox subunit to the C-terminus of CYBA/p22-phox (PubMed:19948736). Aassociates with NOX3 to form a functional NADPH oxidase constitutively generating superoxide (PubMed:15824103, PubMed:17140397).</text>
</comment>
<comment type="subunit">
    <text evidence="1 6 8 10 12 13 14 15 21 25 26 27">Component of the phagocyte NADPH oxidase core complex/cytochrome b558 complex, composed of CYBB (heavy chain (beta)) and CYBA (light chain (alpha)) (PubMed:36241643, PubMed:36413210). Component of the phagocyte NADPH oxidase complex composed of an obligatory core heterodimer formed by the membrane proteins CYBA and CYBB and the cytosolic regulatory subunits NCF1/p47-phox, NCF2/p67-phox, NCF4/p40-phox and the small GTPase RAC1 or RAC2 (PubMed:38355798). Interacts with NCF1 (via SH3 domain) (PubMed:16326715). Interacts with SH3PXD2A (By similarity). Interacts with DUOX1, DUOX2 and TPO (PubMed:15561711). Interacts with NOX4; this interaction mediates superoxide generation (PubMed:15927447). Interacts with calprotectin (S100A8/9) (PubMed:22808130). Interacts with GBP7 (By similarity). Interacts with NOXO1 (PubMed:12716910, PubMed:17140397). Forms a heterodimer with NOX3 and is essential for activity and cell membrane localization of NOX3 (PubMed:15824103, PubMed:17140397). Interacts with NOX1 (PubMed:15322091).</text>
</comment>
<comment type="interaction">
    <interactant intactId="EBI-986058">
        <id>P13498</id>
    </interactant>
    <interactant intactId="EBI-395044">
        <id>P14598</id>
        <label>NCF1</label>
    </interactant>
    <organismsDiffer>false</organismsDiffer>
    <experiments>7</experiments>
</comment>
<comment type="interaction">
    <interactant intactId="EBI-986058">
        <id>P13498</id>
    </interactant>
    <interactant intactId="EBI-1036870">
        <id>Q15080</id>
        <label>NCF4</label>
    </interactant>
    <organismsDiffer>false</organismsDiffer>
    <experiments>2</experiments>
</comment>
<comment type="interaction">
    <interactant intactId="EBI-986058">
        <id>P13498</id>
    </interactant>
    <interactant intactId="EBI-7130806">
        <id>Q8NFA2</id>
        <label>NOXO1</label>
    </interactant>
    <organismsDiffer>false</organismsDiffer>
    <experiments>4</experiments>
</comment>
<comment type="interaction">
    <interactant intactId="EBI-986058">
        <id>P13498</id>
    </interactant>
    <interactant intactId="EBI-20557410">
        <id>Q8NFA2-3</id>
        <label>NOXO1</label>
    </interactant>
    <organismsDiffer>false</organismsDiffer>
    <experiments>3</experiments>
</comment>
<comment type="subcellular location">
    <subcellularLocation>
        <location evidence="11 15 21">Cell membrane</location>
        <topology evidence="25 26">Multi-pass membrane protein</topology>
    </subcellularLocation>
</comment>
<comment type="PTM">
    <text evidence="19">Phosphorylation at Thr-147 enhances NADPH oxidase activity by promoting NCF1/p47-phox binding.</text>
</comment>
<comment type="PTM">
    <text evidence="1">Ubiquitinated at Lys-149 likely by RNF145.</text>
</comment>
<comment type="disease" evidence="3 4 5 7 16 17 20 22 28 29">
    <disease id="DI-00304">
        <name>Granulomatous disease, chronic, autosomal recessive, 4</name>
        <acronym>CGD4</acronym>
        <description>A form of chronic granulomatous disease, a primary immunodeficiency characterized by severe recurrent bacterial and fungal infections, along with manifestations of chronic granulomatous inflammation. It results from an impaired ability of phagocytes to mount a burst of reactive oxygen species in response to pathogens.</description>
        <dbReference type="MIM" id="233690"/>
    </disease>
    <text>The disease is caused by variants affecting the gene represented in this entry.</text>
</comment>
<comment type="similarity">
    <text evidence="31">Belongs to the p22phox family.</text>
</comment>
<comment type="online information" name="CYBAbase">
    <link uri="https://databases.lovd.nl/shared/genes/CYBA"/>
    <text>CYBA mutation db</text>
</comment>
<evidence type="ECO:0000250" key="1">
    <source>
        <dbReference type="UniProtKB" id="Q61462"/>
    </source>
</evidence>
<evidence type="ECO:0000256" key="2">
    <source>
        <dbReference type="SAM" id="MobiDB-lite"/>
    </source>
</evidence>
<evidence type="ECO:0000269" key="3">
    <source>
    </source>
</evidence>
<evidence type="ECO:0000269" key="4">
    <source>
    </source>
</evidence>
<evidence type="ECO:0000269" key="5">
    <source>
    </source>
</evidence>
<evidence type="ECO:0000269" key="6">
    <source>
    </source>
</evidence>
<evidence type="ECO:0000269" key="7">
    <source>
    </source>
</evidence>
<evidence type="ECO:0000269" key="8">
    <source>
    </source>
</evidence>
<evidence type="ECO:0000269" key="9">
    <source>
    </source>
</evidence>
<evidence type="ECO:0000269" key="10">
    <source>
    </source>
</evidence>
<evidence type="ECO:0000269" key="11">
    <source>
    </source>
</evidence>
<evidence type="ECO:0000269" key="12">
    <source>
    </source>
</evidence>
<evidence type="ECO:0000269" key="13">
    <source>
    </source>
</evidence>
<evidence type="ECO:0000269" key="14">
    <source>
    </source>
</evidence>
<evidence type="ECO:0000269" key="15">
    <source>
    </source>
</evidence>
<evidence type="ECO:0000269" key="16">
    <source>
    </source>
</evidence>
<evidence type="ECO:0000269" key="17">
    <source>
    </source>
</evidence>
<evidence type="ECO:0000269" key="18">
    <source>
    </source>
</evidence>
<evidence type="ECO:0000269" key="19">
    <source>
    </source>
</evidence>
<evidence type="ECO:0000269" key="20">
    <source>
    </source>
</evidence>
<evidence type="ECO:0000269" key="21">
    <source>
    </source>
</evidence>
<evidence type="ECO:0000269" key="22">
    <source>
    </source>
</evidence>
<evidence type="ECO:0000269" key="23">
    <source>
    </source>
</evidence>
<evidence type="ECO:0000269" key="24">
    <source>
    </source>
</evidence>
<evidence type="ECO:0000269" key="25">
    <source>
    </source>
</evidence>
<evidence type="ECO:0000269" key="26">
    <source>
    </source>
</evidence>
<evidence type="ECO:0000269" key="27">
    <source>
    </source>
</evidence>
<evidence type="ECO:0000269" key="28">
    <source>
    </source>
</evidence>
<evidence type="ECO:0000269" key="29">
    <source>
    </source>
</evidence>
<evidence type="ECO:0000269" key="30">
    <source ref="2"/>
</evidence>
<evidence type="ECO:0000305" key="31"/>
<evidence type="ECO:0000305" key="32">
    <source>
    </source>
</evidence>
<evidence type="ECO:0000305" key="33">
    <source>
    </source>
</evidence>
<evidence type="ECO:0000312" key="34">
    <source>
        <dbReference type="HGNC" id="HGNC:2577"/>
    </source>
</evidence>
<evidence type="ECO:0007744" key="35">
    <source>
        <dbReference type="PDB" id="1WLP"/>
    </source>
</evidence>
<evidence type="ECO:0007744" key="36">
    <source>
        <dbReference type="PDB" id="7U8G"/>
    </source>
</evidence>
<evidence type="ECO:0007744" key="37">
    <source>
        <dbReference type="PDB" id="8GZ3"/>
    </source>
</evidence>
<evidence type="ECO:0007744" key="38">
    <source>
        <dbReference type="PDB" id="8WEJ"/>
    </source>
</evidence>
<evidence type="ECO:0007744" key="39">
    <source>
        <dbReference type="PDB" id="8X2L"/>
    </source>
</evidence>
<evidence type="ECO:0007744" key="40">
    <source>
    </source>
</evidence>
<evidence type="ECO:0007829" key="41">
    <source>
        <dbReference type="PDB" id="1WLP"/>
    </source>
</evidence>
<evidence type="ECO:0007829" key="42">
    <source>
        <dbReference type="PDB" id="8WEJ"/>
    </source>
</evidence>
<organism>
    <name type="scientific">Homo sapiens</name>
    <name type="common">Human</name>
    <dbReference type="NCBI Taxonomy" id="9606"/>
    <lineage>
        <taxon>Eukaryota</taxon>
        <taxon>Metazoa</taxon>
        <taxon>Chordata</taxon>
        <taxon>Craniata</taxon>
        <taxon>Vertebrata</taxon>
        <taxon>Euteleostomi</taxon>
        <taxon>Mammalia</taxon>
        <taxon>Eutheria</taxon>
        <taxon>Euarchontoglires</taxon>
        <taxon>Primates</taxon>
        <taxon>Haplorrhini</taxon>
        <taxon>Catarrhini</taxon>
        <taxon>Hominidae</taxon>
        <taxon>Homo</taxon>
    </lineage>
</organism>
<sequence length="195" mass="21013">MGQIEWAMWANEQALASGLILITGGIVATAGRFTQWYFGAYSIVAGVFVCLLEYPRGKRKKGSTMERWGQKYMTAVVKLFGPFTRNYYVRAVLHLLLSVPAGFLLATILGTACLAIASGIYLLAAVRGEQWTPIEPKPRERPQIGGTIKQPPSNPPPRPPAEARKKPSEEEAAVAAGGPPGGPQVNPIPVTDEVV</sequence>